<feature type="chain" id="PRO_1000074006" description="Octanoyltransferase">
    <location>
        <begin position="1"/>
        <end position="238"/>
    </location>
</feature>
<feature type="domain" description="BPL/LPL catalytic" evidence="2">
    <location>
        <begin position="44"/>
        <end position="224"/>
    </location>
</feature>
<feature type="active site" description="Acyl-thioester intermediate" evidence="1">
    <location>
        <position position="185"/>
    </location>
</feature>
<feature type="binding site" evidence="1">
    <location>
        <begin position="82"/>
        <end position="89"/>
    </location>
    <ligand>
        <name>substrate</name>
    </ligand>
</feature>
<feature type="binding site" evidence="1">
    <location>
        <begin position="154"/>
        <end position="156"/>
    </location>
    <ligand>
        <name>substrate</name>
    </ligand>
</feature>
<feature type="binding site" evidence="1">
    <location>
        <begin position="167"/>
        <end position="169"/>
    </location>
    <ligand>
        <name>substrate</name>
    </ligand>
</feature>
<feature type="site" description="Lowers pKa of active site Cys" evidence="1">
    <location>
        <position position="151"/>
    </location>
</feature>
<evidence type="ECO:0000255" key="1">
    <source>
        <dbReference type="HAMAP-Rule" id="MF_00013"/>
    </source>
</evidence>
<evidence type="ECO:0000255" key="2">
    <source>
        <dbReference type="PROSITE-ProRule" id="PRU01067"/>
    </source>
</evidence>
<keyword id="KW-0012">Acyltransferase</keyword>
<keyword id="KW-0963">Cytoplasm</keyword>
<keyword id="KW-0808">Transferase</keyword>
<dbReference type="EC" id="2.3.1.181" evidence="1"/>
<dbReference type="EMBL" id="CP000656">
    <property type="protein sequence ID" value="ABP45410.1"/>
    <property type="molecule type" value="Genomic_DNA"/>
</dbReference>
<dbReference type="SMR" id="A4TBJ9"/>
<dbReference type="STRING" id="350054.Mflv_2933"/>
<dbReference type="KEGG" id="mgi:Mflv_2933"/>
<dbReference type="eggNOG" id="COG0321">
    <property type="taxonomic scope" value="Bacteria"/>
</dbReference>
<dbReference type="HOGENOM" id="CLU_035168_2_1_11"/>
<dbReference type="UniPathway" id="UPA00538">
    <property type="reaction ID" value="UER00592"/>
</dbReference>
<dbReference type="GO" id="GO:0005737">
    <property type="term" value="C:cytoplasm"/>
    <property type="evidence" value="ECO:0007669"/>
    <property type="project" value="UniProtKB-SubCell"/>
</dbReference>
<dbReference type="GO" id="GO:0033819">
    <property type="term" value="F:lipoyl(octanoyl) transferase activity"/>
    <property type="evidence" value="ECO:0007669"/>
    <property type="project" value="UniProtKB-EC"/>
</dbReference>
<dbReference type="GO" id="GO:0036211">
    <property type="term" value="P:protein modification process"/>
    <property type="evidence" value="ECO:0007669"/>
    <property type="project" value="InterPro"/>
</dbReference>
<dbReference type="CDD" id="cd16444">
    <property type="entry name" value="LipB"/>
    <property type="match status" value="1"/>
</dbReference>
<dbReference type="FunFam" id="3.30.930.10:FF:000035">
    <property type="entry name" value="Putative lipoyltransferase 2, mitochondrial"/>
    <property type="match status" value="1"/>
</dbReference>
<dbReference type="Gene3D" id="3.30.930.10">
    <property type="entry name" value="Bira Bifunctional Protein, Domain 2"/>
    <property type="match status" value="1"/>
</dbReference>
<dbReference type="HAMAP" id="MF_00013">
    <property type="entry name" value="LipB"/>
    <property type="match status" value="1"/>
</dbReference>
<dbReference type="InterPro" id="IPR045864">
    <property type="entry name" value="aa-tRNA-synth_II/BPL/LPL"/>
</dbReference>
<dbReference type="InterPro" id="IPR004143">
    <property type="entry name" value="BPL_LPL_catalytic"/>
</dbReference>
<dbReference type="InterPro" id="IPR000544">
    <property type="entry name" value="Octanoyltransferase"/>
</dbReference>
<dbReference type="InterPro" id="IPR020605">
    <property type="entry name" value="Octanoyltransferase_CS"/>
</dbReference>
<dbReference type="NCBIfam" id="TIGR00214">
    <property type="entry name" value="lipB"/>
    <property type="match status" value="1"/>
</dbReference>
<dbReference type="NCBIfam" id="NF010925">
    <property type="entry name" value="PRK14345.1"/>
    <property type="match status" value="1"/>
</dbReference>
<dbReference type="PANTHER" id="PTHR10993:SF7">
    <property type="entry name" value="LIPOYLTRANSFERASE 2, MITOCHONDRIAL-RELATED"/>
    <property type="match status" value="1"/>
</dbReference>
<dbReference type="PANTHER" id="PTHR10993">
    <property type="entry name" value="OCTANOYLTRANSFERASE"/>
    <property type="match status" value="1"/>
</dbReference>
<dbReference type="Pfam" id="PF21948">
    <property type="entry name" value="LplA-B_cat"/>
    <property type="match status" value="1"/>
</dbReference>
<dbReference type="PIRSF" id="PIRSF016262">
    <property type="entry name" value="LPLase"/>
    <property type="match status" value="1"/>
</dbReference>
<dbReference type="SUPFAM" id="SSF55681">
    <property type="entry name" value="Class II aaRS and biotin synthetases"/>
    <property type="match status" value="1"/>
</dbReference>
<dbReference type="PROSITE" id="PS51733">
    <property type="entry name" value="BPL_LPL_CATALYTIC"/>
    <property type="match status" value="1"/>
</dbReference>
<dbReference type="PROSITE" id="PS01313">
    <property type="entry name" value="LIPB"/>
    <property type="match status" value="1"/>
</dbReference>
<sequence>MSSVEGMAQSIRSGTEPVRVQWLGRIDYQAAWDLQRELAEERIAGGPDSLLLLEHPEVYTAGRRTLAHERPVDGTPVIDTDRGGKITWHGPGQLVGYPIIGLAEPLDVVNFVRRLEESLISVCASFGVQTGRVEGRSGVWVAGDGGRPDRKIAAIGIRVARATTLHGFAINCDCDLGAFGSIVPCGIADAGVTSLTAELGRTVGVAEVIDRVSEAVLDALDGRIALGVASSPGVDSAQ</sequence>
<name>LIPB_MYCGI</name>
<reference key="1">
    <citation type="submission" date="2007-04" db="EMBL/GenBank/DDBJ databases">
        <title>Complete sequence of chromosome of Mycobacterium gilvum PYR-GCK.</title>
        <authorList>
            <consortium name="US DOE Joint Genome Institute"/>
            <person name="Copeland A."/>
            <person name="Lucas S."/>
            <person name="Lapidus A."/>
            <person name="Barry K."/>
            <person name="Detter J.C."/>
            <person name="Glavina del Rio T."/>
            <person name="Hammon N."/>
            <person name="Israni S."/>
            <person name="Dalin E."/>
            <person name="Tice H."/>
            <person name="Pitluck S."/>
            <person name="Chain P."/>
            <person name="Malfatti S."/>
            <person name="Shin M."/>
            <person name="Vergez L."/>
            <person name="Schmutz J."/>
            <person name="Larimer F."/>
            <person name="Land M."/>
            <person name="Hauser L."/>
            <person name="Kyrpides N."/>
            <person name="Mikhailova N."/>
            <person name="Miller C."/>
            <person name="Richardson P."/>
        </authorList>
    </citation>
    <scope>NUCLEOTIDE SEQUENCE [LARGE SCALE GENOMIC DNA]</scope>
    <source>
        <strain>PYR-GCK</strain>
    </source>
</reference>
<organism>
    <name type="scientific">Mycolicibacterium gilvum (strain PYR-GCK)</name>
    <name type="common">Mycobacterium gilvum (strain PYR-GCK)</name>
    <dbReference type="NCBI Taxonomy" id="350054"/>
    <lineage>
        <taxon>Bacteria</taxon>
        <taxon>Bacillati</taxon>
        <taxon>Actinomycetota</taxon>
        <taxon>Actinomycetes</taxon>
        <taxon>Mycobacteriales</taxon>
        <taxon>Mycobacteriaceae</taxon>
        <taxon>Mycolicibacterium</taxon>
    </lineage>
</organism>
<protein>
    <recommendedName>
        <fullName evidence="1">Octanoyltransferase</fullName>
        <ecNumber evidence="1">2.3.1.181</ecNumber>
    </recommendedName>
    <alternativeName>
        <fullName evidence="1">Lipoate-protein ligase B</fullName>
    </alternativeName>
    <alternativeName>
        <fullName evidence="1">Lipoyl/octanoyl transferase</fullName>
    </alternativeName>
    <alternativeName>
        <fullName evidence="1">Octanoyl-[acyl-carrier-protein]-protein N-octanoyltransferase</fullName>
    </alternativeName>
</protein>
<proteinExistence type="inferred from homology"/>
<accession>A4TBJ9</accession>
<comment type="function">
    <text evidence="1">Catalyzes the transfer of endogenously produced octanoic acid from octanoyl-acyl-carrier-protein onto the lipoyl domains of lipoate-dependent enzymes. Lipoyl-ACP can also act as a substrate although octanoyl-ACP is likely to be the physiological substrate.</text>
</comment>
<comment type="catalytic activity">
    <reaction evidence="1">
        <text>octanoyl-[ACP] + L-lysyl-[protein] = N(6)-octanoyl-L-lysyl-[protein] + holo-[ACP] + H(+)</text>
        <dbReference type="Rhea" id="RHEA:17665"/>
        <dbReference type="Rhea" id="RHEA-COMP:9636"/>
        <dbReference type="Rhea" id="RHEA-COMP:9685"/>
        <dbReference type="Rhea" id="RHEA-COMP:9752"/>
        <dbReference type="Rhea" id="RHEA-COMP:9928"/>
        <dbReference type="ChEBI" id="CHEBI:15378"/>
        <dbReference type="ChEBI" id="CHEBI:29969"/>
        <dbReference type="ChEBI" id="CHEBI:64479"/>
        <dbReference type="ChEBI" id="CHEBI:78463"/>
        <dbReference type="ChEBI" id="CHEBI:78809"/>
        <dbReference type="EC" id="2.3.1.181"/>
    </reaction>
</comment>
<comment type="pathway">
    <text evidence="1">Protein modification; protein lipoylation via endogenous pathway; protein N(6)-(lipoyl)lysine from octanoyl-[acyl-carrier-protein]: step 1/2.</text>
</comment>
<comment type="subcellular location">
    <subcellularLocation>
        <location evidence="1">Cytoplasm</location>
    </subcellularLocation>
</comment>
<comment type="miscellaneous">
    <text evidence="1">In the reaction, the free carboxyl group of octanoic acid is attached via an amide linkage to the epsilon-amino group of a specific lysine residue of lipoyl domains of lipoate-dependent enzymes.</text>
</comment>
<comment type="similarity">
    <text evidence="1">Belongs to the LipB family.</text>
</comment>
<gene>
    <name evidence="1" type="primary">lipB</name>
    <name type="ordered locus">Mflv_2933</name>
</gene>